<evidence type="ECO:0000255" key="1">
    <source>
        <dbReference type="HAMAP-Rule" id="MF_00679"/>
    </source>
</evidence>
<keyword id="KW-0067">ATP-binding</keyword>
<keyword id="KW-0143">Chaperone</keyword>
<keyword id="KW-0547">Nucleotide-binding</keyword>
<keyword id="KW-1185">Reference proteome</keyword>
<proteinExistence type="inferred from homology"/>
<feature type="chain" id="PRO_0000078622" description="Chaperone protein HscA homolog">
    <location>
        <begin position="1"/>
        <end position="622"/>
    </location>
</feature>
<accession>Q62IZ5</accession>
<dbReference type="EMBL" id="CP000010">
    <property type="protein sequence ID" value="AAU47815.1"/>
    <property type="molecule type" value="Genomic_DNA"/>
</dbReference>
<dbReference type="RefSeq" id="WP_004193590.1">
    <property type="nucleotide sequence ID" value="NC_006348.1"/>
</dbReference>
<dbReference type="RefSeq" id="YP_103324.1">
    <property type="nucleotide sequence ID" value="NC_006348.1"/>
</dbReference>
<dbReference type="SMR" id="Q62IZ5"/>
<dbReference type="GeneID" id="92979425"/>
<dbReference type="KEGG" id="bma:BMA1704"/>
<dbReference type="PATRIC" id="fig|243160.12.peg.1746"/>
<dbReference type="eggNOG" id="COG0443">
    <property type="taxonomic scope" value="Bacteria"/>
</dbReference>
<dbReference type="HOGENOM" id="CLU_005965_2_1_4"/>
<dbReference type="Proteomes" id="UP000006693">
    <property type="component" value="Chromosome 1"/>
</dbReference>
<dbReference type="GO" id="GO:0005524">
    <property type="term" value="F:ATP binding"/>
    <property type="evidence" value="ECO:0007669"/>
    <property type="project" value="UniProtKB-KW"/>
</dbReference>
<dbReference type="GO" id="GO:0016887">
    <property type="term" value="F:ATP hydrolysis activity"/>
    <property type="evidence" value="ECO:0007669"/>
    <property type="project" value="UniProtKB-UniRule"/>
</dbReference>
<dbReference type="GO" id="GO:0140662">
    <property type="term" value="F:ATP-dependent protein folding chaperone"/>
    <property type="evidence" value="ECO:0007669"/>
    <property type="project" value="InterPro"/>
</dbReference>
<dbReference type="GO" id="GO:0051082">
    <property type="term" value="F:unfolded protein binding"/>
    <property type="evidence" value="ECO:0007669"/>
    <property type="project" value="InterPro"/>
</dbReference>
<dbReference type="GO" id="GO:0016226">
    <property type="term" value="P:iron-sulfur cluster assembly"/>
    <property type="evidence" value="ECO:0007669"/>
    <property type="project" value="InterPro"/>
</dbReference>
<dbReference type="FunFam" id="3.30.420.40:FF:000046">
    <property type="entry name" value="Chaperone protein HscA"/>
    <property type="match status" value="1"/>
</dbReference>
<dbReference type="FunFam" id="2.60.34.10:FF:000005">
    <property type="entry name" value="Chaperone protein HscA homolog"/>
    <property type="match status" value="1"/>
</dbReference>
<dbReference type="Gene3D" id="1.20.1270.10">
    <property type="match status" value="1"/>
</dbReference>
<dbReference type="Gene3D" id="3.30.420.40">
    <property type="match status" value="2"/>
</dbReference>
<dbReference type="Gene3D" id="3.90.640.10">
    <property type="entry name" value="Actin, Chain A, domain 4"/>
    <property type="match status" value="1"/>
</dbReference>
<dbReference type="Gene3D" id="2.60.34.10">
    <property type="entry name" value="Substrate Binding Domain Of DNAk, Chain A, domain 1"/>
    <property type="match status" value="1"/>
</dbReference>
<dbReference type="HAMAP" id="MF_00679">
    <property type="entry name" value="HscA"/>
    <property type="match status" value="1"/>
</dbReference>
<dbReference type="InterPro" id="IPR043129">
    <property type="entry name" value="ATPase_NBD"/>
</dbReference>
<dbReference type="InterPro" id="IPR018181">
    <property type="entry name" value="Heat_shock_70_CS"/>
</dbReference>
<dbReference type="InterPro" id="IPR029048">
    <property type="entry name" value="HSP70_C_sf"/>
</dbReference>
<dbReference type="InterPro" id="IPR029047">
    <property type="entry name" value="HSP70_peptide-bd_sf"/>
</dbReference>
<dbReference type="InterPro" id="IPR013126">
    <property type="entry name" value="Hsp_70_fam"/>
</dbReference>
<dbReference type="InterPro" id="IPR010236">
    <property type="entry name" value="ISC_FeS_clus_asmbl_HscA"/>
</dbReference>
<dbReference type="NCBIfam" id="TIGR01991">
    <property type="entry name" value="HscA"/>
    <property type="match status" value="1"/>
</dbReference>
<dbReference type="NCBIfam" id="NF003520">
    <property type="entry name" value="PRK05183.1"/>
    <property type="match status" value="1"/>
</dbReference>
<dbReference type="PANTHER" id="PTHR19375">
    <property type="entry name" value="HEAT SHOCK PROTEIN 70KDA"/>
    <property type="match status" value="1"/>
</dbReference>
<dbReference type="Pfam" id="PF00012">
    <property type="entry name" value="HSP70"/>
    <property type="match status" value="1"/>
</dbReference>
<dbReference type="PRINTS" id="PR00301">
    <property type="entry name" value="HEATSHOCK70"/>
</dbReference>
<dbReference type="SUPFAM" id="SSF53067">
    <property type="entry name" value="Actin-like ATPase domain"/>
    <property type="match status" value="2"/>
</dbReference>
<dbReference type="SUPFAM" id="SSF100934">
    <property type="entry name" value="Heat shock protein 70kD (HSP70), C-terminal subdomain"/>
    <property type="match status" value="1"/>
</dbReference>
<dbReference type="SUPFAM" id="SSF100920">
    <property type="entry name" value="Heat shock protein 70kD (HSP70), peptide-binding domain"/>
    <property type="match status" value="1"/>
</dbReference>
<dbReference type="PROSITE" id="PS00297">
    <property type="entry name" value="HSP70_1"/>
    <property type="match status" value="1"/>
</dbReference>
<dbReference type="PROSITE" id="PS00329">
    <property type="entry name" value="HSP70_2"/>
    <property type="match status" value="1"/>
</dbReference>
<dbReference type="PROSITE" id="PS01036">
    <property type="entry name" value="HSP70_3"/>
    <property type="match status" value="1"/>
</dbReference>
<comment type="function">
    <text evidence="1">Chaperone involved in the maturation of iron-sulfur cluster-containing proteins. Has a low intrinsic ATPase activity which is markedly stimulated by HscB.</text>
</comment>
<comment type="similarity">
    <text evidence="1">Belongs to the heat shock protein 70 family.</text>
</comment>
<organism>
    <name type="scientific">Burkholderia mallei (strain ATCC 23344)</name>
    <dbReference type="NCBI Taxonomy" id="243160"/>
    <lineage>
        <taxon>Bacteria</taxon>
        <taxon>Pseudomonadati</taxon>
        <taxon>Pseudomonadota</taxon>
        <taxon>Betaproteobacteria</taxon>
        <taxon>Burkholderiales</taxon>
        <taxon>Burkholderiaceae</taxon>
        <taxon>Burkholderia</taxon>
        <taxon>pseudomallei group</taxon>
    </lineage>
</organism>
<reference key="1">
    <citation type="journal article" date="2004" name="Proc. Natl. Acad. Sci. U.S.A.">
        <title>Structural flexibility in the Burkholderia mallei genome.</title>
        <authorList>
            <person name="Nierman W.C."/>
            <person name="DeShazer D."/>
            <person name="Kim H.S."/>
            <person name="Tettelin H."/>
            <person name="Nelson K.E."/>
            <person name="Feldblyum T.V."/>
            <person name="Ulrich R.L."/>
            <person name="Ronning C.M."/>
            <person name="Brinkac L.M."/>
            <person name="Daugherty S.C."/>
            <person name="Davidsen T.D."/>
            <person name="DeBoy R.T."/>
            <person name="Dimitrov G."/>
            <person name="Dodson R.J."/>
            <person name="Durkin A.S."/>
            <person name="Gwinn M.L."/>
            <person name="Haft D.H."/>
            <person name="Khouri H.M."/>
            <person name="Kolonay J.F."/>
            <person name="Madupu R."/>
            <person name="Mohammoud Y."/>
            <person name="Nelson W.C."/>
            <person name="Radune D."/>
            <person name="Romero C.M."/>
            <person name="Sarria S."/>
            <person name="Selengut J."/>
            <person name="Shamblin C."/>
            <person name="Sullivan S.A."/>
            <person name="White O."/>
            <person name="Yu Y."/>
            <person name="Zafar N."/>
            <person name="Zhou L."/>
            <person name="Fraser C.M."/>
        </authorList>
    </citation>
    <scope>NUCLEOTIDE SEQUENCE [LARGE SCALE GENOMIC DNA]</scope>
    <source>
        <strain>ATCC 23344</strain>
    </source>
</reference>
<protein>
    <recommendedName>
        <fullName evidence="1">Chaperone protein HscA homolog</fullName>
    </recommendedName>
</protein>
<gene>
    <name evidence="1" type="primary">hscA</name>
    <name type="ordered locus">BMA1704</name>
</gene>
<name>HSCA_BURMA</name>
<sequence>MALLQISEPGMAPAPHQRRLAVGIDLGTTNSLVAAVRNSIPEALPDDAGRVLLPSVVRYLDKGGRRIGHAAKEEAAIDPRNTIVSVKRFMGRGKAEVEGAANAPYEFVDAPGMVQIRTVDGVKSPVEVSAEILATLRQRAEDTLGDDLVGAVITVPAYFDDAQRQATKDAARLAGLNVLRLLNEPTAAAIAYGLDNGAEGLYAVYDLGGGTFDLSILKLTKGVFEVLAAGGDSALGGDDFDHLLFEHVLAQAGLEVAALAPEDVRLLLDRVRGAKEALSAAPQARVDVKLSTGEKLAQTITRDTFAALVEPLVQRTLGPTRKALRDAQVSAADIKGVVLVGGATRMPVIRDAVAKYFGQPPLVNLDPDQVVALGAAIQADLLAGNRSGGDDWLLLDVIPLSLGVETMGGLVEKIIPRNSTIPVARAQEFTTFKDGQTAMAIHVVQGERELVSDCRSLARFELRGIPPMTAGAARIRVTYQVDADGLLSVFAREQHSGVEASVVVKPSYGLGDDDIARMLEDSFKTAEVDMRARALREAQVEAQRLVEATEAALVADGDLLDASERATVDALVASLRALAPGDDADAIDTATKALAEGTDEFAARRMDKSIKRALAGRKLDEI</sequence>